<sequence>MLTMAEKRNIFLVGPMGAGKSTIGRHLAQQLHMEFFDSDTVIEDRTGADISWVFDVEGEEGFRVREEGVIDDLTQEQGIVLATGGGSVVSKENRNRLSARGVVVYLETTIEKQLARTQRDKKRPLLQTDAPREVLEALAAERNPMYEEVSDYVVRTDDQSAKVVANQIINMLEER</sequence>
<accession>Q6LVF6</accession>
<keyword id="KW-0028">Amino-acid biosynthesis</keyword>
<keyword id="KW-0057">Aromatic amino acid biosynthesis</keyword>
<keyword id="KW-0067">ATP-binding</keyword>
<keyword id="KW-0963">Cytoplasm</keyword>
<keyword id="KW-0418">Kinase</keyword>
<keyword id="KW-0460">Magnesium</keyword>
<keyword id="KW-0479">Metal-binding</keyword>
<keyword id="KW-0547">Nucleotide-binding</keyword>
<keyword id="KW-1185">Reference proteome</keyword>
<keyword id="KW-0808">Transferase</keyword>
<evidence type="ECO:0000255" key="1">
    <source>
        <dbReference type="HAMAP-Rule" id="MF_00109"/>
    </source>
</evidence>
<proteinExistence type="inferred from homology"/>
<protein>
    <recommendedName>
        <fullName evidence="1">Shikimate kinase</fullName>
        <shortName evidence="1">SK</shortName>
        <ecNumber evidence="1">2.7.1.71</ecNumber>
    </recommendedName>
</protein>
<name>AROK_PHOPR</name>
<dbReference type="EC" id="2.7.1.71" evidence="1"/>
<dbReference type="EMBL" id="CR378663">
    <property type="protein sequence ID" value="CAG18719.1"/>
    <property type="molecule type" value="Genomic_DNA"/>
</dbReference>
<dbReference type="SMR" id="Q6LVF6"/>
<dbReference type="STRING" id="298386.PBPRA0280"/>
<dbReference type="KEGG" id="ppr:PBPRA0280"/>
<dbReference type="eggNOG" id="COG0703">
    <property type="taxonomic scope" value="Bacteria"/>
</dbReference>
<dbReference type="HOGENOM" id="CLU_057607_2_2_6"/>
<dbReference type="UniPathway" id="UPA00053">
    <property type="reaction ID" value="UER00088"/>
</dbReference>
<dbReference type="Proteomes" id="UP000000593">
    <property type="component" value="Chromosome 1"/>
</dbReference>
<dbReference type="GO" id="GO:0005829">
    <property type="term" value="C:cytosol"/>
    <property type="evidence" value="ECO:0007669"/>
    <property type="project" value="TreeGrafter"/>
</dbReference>
<dbReference type="GO" id="GO:0005524">
    <property type="term" value="F:ATP binding"/>
    <property type="evidence" value="ECO:0007669"/>
    <property type="project" value="UniProtKB-UniRule"/>
</dbReference>
<dbReference type="GO" id="GO:0000287">
    <property type="term" value="F:magnesium ion binding"/>
    <property type="evidence" value="ECO:0007669"/>
    <property type="project" value="UniProtKB-UniRule"/>
</dbReference>
<dbReference type="GO" id="GO:0004765">
    <property type="term" value="F:shikimate kinase activity"/>
    <property type="evidence" value="ECO:0007669"/>
    <property type="project" value="UniProtKB-UniRule"/>
</dbReference>
<dbReference type="GO" id="GO:0008652">
    <property type="term" value="P:amino acid biosynthetic process"/>
    <property type="evidence" value="ECO:0007669"/>
    <property type="project" value="UniProtKB-KW"/>
</dbReference>
<dbReference type="GO" id="GO:0009073">
    <property type="term" value="P:aromatic amino acid family biosynthetic process"/>
    <property type="evidence" value="ECO:0007669"/>
    <property type="project" value="UniProtKB-KW"/>
</dbReference>
<dbReference type="GO" id="GO:0009423">
    <property type="term" value="P:chorismate biosynthetic process"/>
    <property type="evidence" value="ECO:0007669"/>
    <property type="project" value="UniProtKB-UniRule"/>
</dbReference>
<dbReference type="CDD" id="cd00464">
    <property type="entry name" value="SK"/>
    <property type="match status" value="1"/>
</dbReference>
<dbReference type="FunFam" id="3.40.50.300:FF:000099">
    <property type="entry name" value="Shikimate kinase 1"/>
    <property type="match status" value="1"/>
</dbReference>
<dbReference type="Gene3D" id="3.40.50.300">
    <property type="entry name" value="P-loop containing nucleotide triphosphate hydrolases"/>
    <property type="match status" value="1"/>
</dbReference>
<dbReference type="HAMAP" id="MF_00109">
    <property type="entry name" value="Shikimate_kinase"/>
    <property type="match status" value="1"/>
</dbReference>
<dbReference type="InterPro" id="IPR027417">
    <property type="entry name" value="P-loop_NTPase"/>
</dbReference>
<dbReference type="InterPro" id="IPR031322">
    <property type="entry name" value="Shikimate/glucono_kinase"/>
</dbReference>
<dbReference type="InterPro" id="IPR000623">
    <property type="entry name" value="Shikimate_kinase/TSH1"/>
</dbReference>
<dbReference type="InterPro" id="IPR023000">
    <property type="entry name" value="Shikimate_kinase_CS"/>
</dbReference>
<dbReference type="NCBIfam" id="NF003456">
    <property type="entry name" value="PRK05057.1"/>
    <property type="match status" value="1"/>
</dbReference>
<dbReference type="PANTHER" id="PTHR21087">
    <property type="entry name" value="SHIKIMATE KINASE"/>
    <property type="match status" value="1"/>
</dbReference>
<dbReference type="PANTHER" id="PTHR21087:SF16">
    <property type="entry name" value="SHIKIMATE KINASE 1, CHLOROPLASTIC"/>
    <property type="match status" value="1"/>
</dbReference>
<dbReference type="Pfam" id="PF01202">
    <property type="entry name" value="SKI"/>
    <property type="match status" value="1"/>
</dbReference>
<dbReference type="PRINTS" id="PR01100">
    <property type="entry name" value="SHIKIMTKNASE"/>
</dbReference>
<dbReference type="SUPFAM" id="SSF52540">
    <property type="entry name" value="P-loop containing nucleoside triphosphate hydrolases"/>
    <property type="match status" value="1"/>
</dbReference>
<dbReference type="PROSITE" id="PS01128">
    <property type="entry name" value="SHIKIMATE_KINASE"/>
    <property type="match status" value="1"/>
</dbReference>
<reference key="1">
    <citation type="journal article" date="2005" name="Science">
        <title>Life at depth: Photobacterium profundum genome sequence and expression analysis.</title>
        <authorList>
            <person name="Vezzi A."/>
            <person name="Campanaro S."/>
            <person name="D'Angelo M."/>
            <person name="Simonato F."/>
            <person name="Vitulo N."/>
            <person name="Lauro F.M."/>
            <person name="Cestaro A."/>
            <person name="Malacrida G."/>
            <person name="Simionati B."/>
            <person name="Cannata N."/>
            <person name="Romualdi C."/>
            <person name="Bartlett D.H."/>
            <person name="Valle G."/>
        </authorList>
    </citation>
    <scope>NUCLEOTIDE SEQUENCE [LARGE SCALE GENOMIC DNA]</scope>
    <source>
        <strain>ATCC BAA-1253 / SS9</strain>
    </source>
</reference>
<gene>
    <name evidence="1" type="primary">aroK</name>
    <name type="ordered locus">PBPRA0280</name>
</gene>
<feature type="chain" id="PRO_0000237906" description="Shikimate kinase">
    <location>
        <begin position="1"/>
        <end position="175"/>
    </location>
</feature>
<feature type="binding site" evidence="1">
    <location>
        <begin position="17"/>
        <end position="22"/>
    </location>
    <ligand>
        <name>ATP</name>
        <dbReference type="ChEBI" id="CHEBI:30616"/>
    </ligand>
</feature>
<feature type="binding site" evidence="1">
    <location>
        <position position="21"/>
    </location>
    <ligand>
        <name>Mg(2+)</name>
        <dbReference type="ChEBI" id="CHEBI:18420"/>
    </ligand>
</feature>
<feature type="binding site" evidence="1">
    <location>
        <position position="39"/>
    </location>
    <ligand>
        <name>substrate</name>
    </ligand>
</feature>
<feature type="binding site" evidence="1">
    <location>
        <position position="63"/>
    </location>
    <ligand>
        <name>substrate</name>
    </ligand>
</feature>
<feature type="binding site" evidence="1">
    <location>
        <position position="85"/>
    </location>
    <ligand>
        <name>substrate</name>
    </ligand>
</feature>
<feature type="binding site" evidence="1">
    <location>
        <position position="123"/>
    </location>
    <ligand>
        <name>ATP</name>
        <dbReference type="ChEBI" id="CHEBI:30616"/>
    </ligand>
</feature>
<feature type="binding site" evidence="1">
    <location>
        <position position="142"/>
    </location>
    <ligand>
        <name>substrate</name>
    </ligand>
</feature>
<feature type="binding site" evidence="1">
    <location>
        <position position="159"/>
    </location>
    <ligand>
        <name>ATP</name>
        <dbReference type="ChEBI" id="CHEBI:30616"/>
    </ligand>
</feature>
<organism>
    <name type="scientific">Photobacterium profundum (strain SS9)</name>
    <dbReference type="NCBI Taxonomy" id="298386"/>
    <lineage>
        <taxon>Bacteria</taxon>
        <taxon>Pseudomonadati</taxon>
        <taxon>Pseudomonadota</taxon>
        <taxon>Gammaproteobacteria</taxon>
        <taxon>Vibrionales</taxon>
        <taxon>Vibrionaceae</taxon>
        <taxon>Photobacterium</taxon>
    </lineage>
</organism>
<comment type="function">
    <text evidence="1">Catalyzes the specific phosphorylation of the 3-hydroxyl group of shikimic acid using ATP as a cosubstrate.</text>
</comment>
<comment type="catalytic activity">
    <reaction evidence="1">
        <text>shikimate + ATP = 3-phosphoshikimate + ADP + H(+)</text>
        <dbReference type="Rhea" id="RHEA:13121"/>
        <dbReference type="ChEBI" id="CHEBI:15378"/>
        <dbReference type="ChEBI" id="CHEBI:30616"/>
        <dbReference type="ChEBI" id="CHEBI:36208"/>
        <dbReference type="ChEBI" id="CHEBI:145989"/>
        <dbReference type="ChEBI" id="CHEBI:456216"/>
        <dbReference type="EC" id="2.7.1.71"/>
    </reaction>
</comment>
<comment type="cofactor">
    <cofactor evidence="1">
        <name>Mg(2+)</name>
        <dbReference type="ChEBI" id="CHEBI:18420"/>
    </cofactor>
    <text evidence="1">Binds 1 Mg(2+) ion per subunit.</text>
</comment>
<comment type="pathway">
    <text evidence="1">Metabolic intermediate biosynthesis; chorismate biosynthesis; chorismate from D-erythrose 4-phosphate and phosphoenolpyruvate: step 5/7.</text>
</comment>
<comment type="subunit">
    <text evidence="1">Monomer.</text>
</comment>
<comment type="subcellular location">
    <subcellularLocation>
        <location evidence="1">Cytoplasm</location>
    </subcellularLocation>
</comment>
<comment type="similarity">
    <text evidence="1">Belongs to the shikimate kinase family.</text>
</comment>